<accession>Q73NW1</accession>
<organism>
    <name type="scientific">Treponema denticola (strain ATCC 35405 / DSM 14222 / CIP 103919 / JCM 8153 / KCTC 15104)</name>
    <dbReference type="NCBI Taxonomy" id="243275"/>
    <lineage>
        <taxon>Bacteria</taxon>
        <taxon>Pseudomonadati</taxon>
        <taxon>Spirochaetota</taxon>
        <taxon>Spirochaetia</taxon>
        <taxon>Spirochaetales</taxon>
        <taxon>Treponemataceae</taxon>
        <taxon>Treponema</taxon>
    </lineage>
</organism>
<comment type="function">
    <text evidence="1">Involved in mRNA degradation. Catalyzes the phosphorolysis of single-stranded polyribonucleotides processively in the 3'- to 5'-direction.</text>
</comment>
<comment type="catalytic activity">
    <reaction evidence="1">
        <text>RNA(n+1) + phosphate = RNA(n) + a ribonucleoside 5'-diphosphate</text>
        <dbReference type="Rhea" id="RHEA:22096"/>
        <dbReference type="Rhea" id="RHEA-COMP:14527"/>
        <dbReference type="Rhea" id="RHEA-COMP:17342"/>
        <dbReference type="ChEBI" id="CHEBI:43474"/>
        <dbReference type="ChEBI" id="CHEBI:57930"/>
        <dbReference type="ChEBI" id="CHEBI:140395"/>
        <dbReference type="EC" id="2.7.7.8"/>
    </reaction>
</comment>
<comment type="cofactor">
    <cofactor evidence="1">
        <name>Mg(2+)</name>
        <dbReference type="ChEBI" id="CHEBI:18420"/>
    </cofactor>
</comment>
<comment type="subcellular location">
    <subcellularLocation>
        <location evidence="1">Cytoplasm</location>
    </subcellularLocation>
</comment>
<comment type="similarity">
    <text evidence="1">Belongs to the polyribonucleotide nucleotidyltransferase family.</text>
</comment>
<name>PNP_TREDE</name>
<dbReference type="EC" id="2.7.7.8" evidence="1"/>
<dbReference type="EMBL" id="AE017226">
    <property type="protein sequence ID" value="AAS11530.1"/>
    <property type="molecule type" value="Genomic_DNA"/>
</dbReference>
<dbReference type="RefSeq" id="NP_971649.1">
    <property type="nucleotide sequence ID" value="NC_002967.9"/>
</dbReference>
<dbReference type="RefSeq" id="WP_002682350.1">
    <property type="nucleotide sequence ID" value="NC_002967.9"/>
</dbReference>
<dbReference type="SMR" id="Q73NW1"/>
<dbReference type="STRING" id="243275.TDE_1041"/>
<dbReference type="PaxDb" id="243275-TDE_1041"/>
<dbReference type="GeneID" id="2741315"/>
<dbReference type="KEGG" id="tde:TDE_1041"/>
<dbReference type="PATRIC" id="fig|243275.7.peg.1001"/>
<dbReference type="eggNOG" id="COG1185">
    <property type="taxonomic scope" value="Bacteria"/>
</dbReference>
<dbReference type="HOGENOM" id="CLU_004217_2_2_12"/>
<dbReference type="OrthoDB" id="9804305at2"/>
<dbReference type="Proteomes" id="UP000008212">
    <property type="component" value="Chromosome"/>
</dbReference>
<dbReference type="GO" id="GO:0005829">
    <property type="term" value="C:cytosol"/>
    <property type="evidence" value="ECO:0007669"/>
    <property type="project" value="TreeGrafter"/>
</dbReference>
<dbReference type="GO" id="GO:0000175">
    <property type="term" value="F:3'-5'-RNA exonuclease activity"/>
    <property type="evidence" value="ECO:0007669"/>
    <property type="project" value="TreeGrafter"/>
</dbReference>
<dbReference type="GO" id="GO:0000287">
    <property type="term" value="F:magnesium ion binding"/>
    <property type="evidence" value="ECO:0007669"/>
    <property type="project" value="UniProtKB-UniRule"/>
</dbReference>
<dbReference type="GO" id="GO:0004654">
    <property type="term" value="F:polyribonucleotide nucleotidyltransferase activity"/>
    <property type="evidence" value="ECO:0007669"/>
    <property type="project" value="UniProtKB-UniRule"/>
</dbReference>
<dbReference type="GO" id="GO:0003723">
    <property type="term" value="F:RNA binding"/>
    <property type="evidence" value="ECO:0007669"/>
    <property type="project" value="UniProtKB-UniRule"/>
</dbReference>
<dbReference type="GO" id="GO:0006402">
    <property type="term" value="P:mRNA catabolic process"/>
    <property type="evidence" value="ECO:0007669"/>
    <property type="project" value="UniProtKB-UniRule"/>
</dbReference>
<dbReference type="GO" id="GO:0006396">
    <property type="term" value="P:RNA processing"/>
    <property type="evidence" value="ECO:0007669"/>
    <property type="project" value="InterPro"/>
</dbReference>
<dbReference type="CDD" id="cd02393">
    <property type="entry name" value="KH-I_PNPase"/>
    <property type="match status" value="1"/>
</dbReference>
<dbReference type="CDD" id="cd11363">
    <property type="entry name" value="RNase_PH_PNPase_1"/>
    <property type="match status" value="1"/>
</dbReference>
<dbReference type="CDD" id="cd11364">
    <property type="entry name" value="RNase_PH_PNPase_2"/>
    <property type="match status" value="1"/>
</dbReference>
<dbReference type="CDD" id="cd04472">
    <property type="entry name" value="S1_PNPase"/>
    <property type="match status" value="1"/>
</dbReference>
<dbReference type="FunFam" id="2.40.50.140:FF:000023">
    <property type="entry name" value="Polyribonucleotide nucleotidyltransferase"/>
    <property type="match status" value="1"/>
</dbReference>
<dbReference type="FunFam" id="3.30.1370.10:FF:000001">
    <property type="entry name" value="Polyribonucleotide nucleotidyltransferase"/>
    <property type="match status" value="1"/>
</dbReference>
<dbReference type="FunFam" id="3.30.230.70:FF:000001">
    <property type="entry name" value="Polyribonucleotide nucleotidyltransferase"/>
    <property type="match status" value="1"/>
</dbReference>
<dbReference type="FunFam" id="3.30.230.70:FF:000002">
    <property type="entry name" value="Polyribonucleotide nucleotidyltransferase"/>
    <property type="match status" value="1"/>
</dbReference>
<dbReference type="Gene3D" id="3.30.230.70">
    <property type="entry name" value="GHMP Kinase, N-terminal domain"/>
    <property type="match status" value="2"/>
</dbReference>
<dbReference type="Gene3D" id="3.30.1370.10">
    <property type="entry name" value="K Homology domain, type 1"/>
    <property type="match status" value="1"/>
</dbReference>
<dbReference type="Gene3D" id="2.40.50.140">
    <property type="entry name" value="Nucleic acid-binding proteins"/>
    <property type="match status" value="1"/>
</dbReference>
<dbReference type="HAMAP" id="MF_01595">
    <property type="entry name" value="PNPase"/>
    <property type="match status" value="1"/>
</dbReference>
<dbReference type="InterPro" id="IPR001247">
    <property type="entry name" value="ExoRNase_PH_dom1"/>
</dbReference>
<dbReference type="InterPro" id="IPR015847">
    <property type="entry name" value="ExoRNase_PH_dom2"/>
</dbReference>
<dbReference type="InterPro" id="IPR036345">
    <property type="entry name" value="ExoRNase_PH_dom2_sf"/>
</dbReference>
<dbReference type="InterPro" id="IPR004087">
    <property type="entry name" value="KH_dom"/>
</dbReference>
<dbReference type="InterPro" id="IPR004088">
    <property type="entry name" value="KH_dom_type_1"/>
</dbReference>
<dbReference type="InterPro" id="IPR036612">
    <property type="entry name" value="KH_dom_type_1_sf"/>
</dbReference>
<dbReference type="InterPro" id="IPR012340">
    <property type="entry name" value="NA-bd_OB-fold"/>
</dbReference>
<dbReference type="InterPro" id="IPR012162">
    <property type="entry name" value="PNPase"/>
</dbReference>
<dbReference type="InterPro" id="IPR027408">
    <property type="entry name" value="PNPase/RNase_PH_dom_sf"/>
</dbReference>
<dbReference type="InterPro" id="IPR015848">
    <property type="entry name" value="PNPase_PH_RNA-bd_bac/org-type"/>
</dbReference>
<dbReference type="InterPro" id="IPR020568">
    <property type="entry name" value="Ribosomal_Su5_D2-typ_SF"/>
</dbReference>
<dbReference type="InterPro" id="IPR003029">
    <property type="entry name" value="S1_domain"/>
</dbReference>
<dbReference type="NCBIfam" id="TIGR03591">
    <property type="entry name" value="polynuc_phos"/>
    <property type="match status" value="1"/>
</dbReference>
<dbReference type="NCBIfam" id="NF008805">
    <property type="entry name" value="PRK11824.1"/>
    <property type="match status" value="1"/>
</dbReference>
<dbReference type="PANTHER" id="PTHR11252">
    <property type="entry name" value="POLYRIBONUCLEOTIDE NUCLEOTIDYLTRANSFERASE"/>
    <property type="match status" value="1"/>
</dbReference>
<dbReference type="PANTHER" id="PTHR11252:SF0">
    <property type="entry name" value="POLYRIBONUCLEOTIDE NUCLEOTIDYLTRANSFERASE 1, MITOCHONDRIAL"/>
    <property type="match status" value="1"/>
</dbReference>
<dbReference type="Pfam" id="PF00013">
    <property type="entry name" value="KH_1"/>
    <property type="match status" value="1"/>
</dbReference>
<dbReference type="Pfam" id="PF03726">
    <property type="entry name" value="PNPase"/>
    <property type="match status" value="1"/>
</dbReference>
<dbReference type="Pfam" id="PF01138">
    <property type="entry name" value="RNase_PH"/>
    <property type="match status" value="2"/>
</dbReference>
<dbReference type="Pfam" id="PF03725">
    <property type="entry name" value="RNase_PH_C"/>
    <property type="match status" value="2"/>
</dbReference>
<dbReference type="Pfam" id="PF00575">
    <property type="entry name" value="S1"/>
    <property type="match status" value="1"/>
</dbReference>
<dbReference type="PIRSF" id="PIRSF005499">
    <property type="entry name" value="PNPase"/>
    <property type="match status" value="1"/>
</dbReference>
<dbReference type="SMART" id="SM00322">
    <property type="entry name" value="KH"/>
    <property type="match status" value="1"/>
</dbReference>
<dbReference type="SMART" id="SM00316">
    <property type="entry name" value="S1"/>
    <property type="match status" value="1"/>
</dbReference>
<dbReference type="SUPFAM" id="SSF54791">
    <property type="entry name" value="Eukaryotic type KH-domain (KH-domain type I)"/>
    <property type="match status" value="1"/>
</dbReference>
<dbReference type="SUPFAM" id="SSF50249">
    <property type="entry name" value="Nucleic acid-binding proteins"/>
    <property type="match status" value="1"/>
</dbReference>
<dbReference type="SUPFAM" id="SSF55666">
    <property type="entry name" value="Ribonuclease PH domain 2-like"/>
    <property type="match status" value="2"/>
</dbReference>
<dbReference type="SUPFAM" id="SSF54211">
    <property type="entry name" value="Ribosomal protein S5 domain 2-like"/>
    <property type="match status" value="2"/>
</dbReference>
<dbReference type="PROSITE" id="PS50084">
    <property type="entry name" value="KH_TYPE_1"/>
    <property type="match status" value="1"/>
</dbReference>
<dbReference type="PROSITE" id="PS50126">
    <property type="entry name" value="S1"/>
    <property type="match status" value="1"/>
</dbReference>
<protein>
    <recommendedName>
        <fullName evidence="1">Polyribonucleotide nucleotidyltransferase</fullName>
        <ecNumber evidence="1">2.7.7.8</ecNumber>
    </recommendedName>
    <alternativeName>
        <fullName evidence="1">Polynucleotide phosphorylase</fullName>
        <shortName evidence="1">PNPase</shortName>
    </alternativeName>
</protein>
<proteinExistence type="inferred from homology"/>
<gene>
    <name evidence="1" type="primary">pnp</name>
    <name type="ordered locus">TDE_1041</name>
</gene>
<reference key="1">
    <citation type="journal article" date="2004" name="Proc. Natl. Acad. Sci. U.S.A.">
        <title>Comparison of the genome of the oral pathogen Treponema denticola with other spirochete genomes.</title>
        <authorList>
            <person name="Seshadri R."/>
            <person name="Myers G.S.A."/>
            <person name="Tettelin H."/>
            <person name="Eisen J.A."/>
            <person name="Heidelberg J.F."/>
            <person name="Dodson R.J."/>
            <person name="Davidsen T.M."/>
            <person name="DeBoy R.T."/>
            <person name="Fouts D.E."/>
            <person name="Haft D.H."/>
            <person name="Selengut J."/>
            <person name="Ren Q."/>
            <person name="Brinkac L.M."/>
            <person name="Madupu R."/>
            <person name="Kolonay J.F."/>
            <person name="Durkin S.A."/>
            <person name="Daugherty S.C."/>
            <person name="Shetty J."/>
            <person name="Shvartsbeyn A."/>
            <person name="Gebregeorgis E."/>
            <person name="Geer K."/>
            <person name="Tsegaye G."/>
            <person name="Malek J.A."/>
            <person name="Ayodeji B."/>
            <person name="Shatsman S."/>
            <person name="McLeod M.P."/>
            <person name="Smajs D."/>
            <person name="Howell J.K."/>
            <person name="Pal S."/>
            <person name="Amin A."/>
            <person name="Vashisth P."/>
            <person name="McNeill T.Z."/>
            <person name="Xiang Q."/>
            <person name="Sodergren E."/>
            <person name="Baca E."/>
            <person name="Weinstock G.M."/>
            <person name="Norris S.J."/>
            <person name="Fraser C.M."/>
            <person name="Paulsen I.T."/>
        </authorList>
    </citation>
    <scope>NUCLEOTIDE SEQUENCE [LARGE SCALE GENOMIC DNA]</scope>
    <source>
        <strain>ATCC 35405 / DSM 14222 / CIP 103919 / JCM 8153 / KCTC 15104</strain>
    </source>
</reference>
<feature type="chain" id="PRO_0000329920" description="Polyribonucleotide nucleotidyltransferase">
    <location>
        <begin position="1"/>
        <end position="698"/>
    </location>
</feature>
<feature type="domain" description="KH" evidence="1">
    <location>
        <begin position="552"/>
        <end position="612"/>
    </location>
</feature>
<feature type="domain" description="S1 motif" evidence="1">
    <location>
        <begin position="622"/>
        <end position="690"/>
    </location>
</feature>
<feature type="binding site" evidence="1">
    <location>
        <position position="485"/>
    </location>
    <ligand>
        <name>Mg(2+)</name>
        <dbReference type="ChEBI" id="CHEBI:18420"/>
    </ligand>
</feature>
<feature type="binding site" evidence="1">
    <location>
        <position position="491"/>
    </location>
    <ligand>
        <name>Mg(2+)</name>
        <dbReference type="ChEBI" id="CHEBI:18420"/>
    </ligand>
</feature>
<keyword id="KW-0963">Cytoplasm</keyword>
<keyword id="KW-0460">Magnesium</keyword>
<keyword id="KW-0479">Metal-binding</keyword>
<keyword id="KW-0548">Nucleotidyltransferase</keyword>
<keyword id="KW-1185">Reference proteome</keyword>
<keyword id="KW-0694">RNA-binding</keyword>
<keyword id="KW-0808">Transferase</keyword>
<sequence length="698" mass="76770">MRKRVTYKIGEHDLILETGYLAKQANGSIYAEYAGSAILATICASGQAQEGLDYVPLTVDYNEKYYAAGKIPGGFIKREGRPKDKEILVSRLIDRPMRPLFNKEFGREIQLVPTCISTDMINPPDILAVIASSAAVHISDIPFDGPVAAARVAYKNGEYIINPTFSQIETADMEIVVAGTKEGITMVEGGANEVSEEVMLTALEKAHEMIKSLCKMQEDLRELAGKEKLPLVPLEAELENKQAIYDEAFPRLSKTLYLSTKMERREESDKVKKELAEKYAEQLEDEIQLKLFNALFEEMEYNILRTNILDKGLRVDGRGTKDIRPITCEIGVLPRPHGSAVFTRGETQSLGVVTIGTVFDEQIYDDIEGDRRENFILHYNFPPFSVGEVGRLGTGRREIGHGNLAHRSLYPMVPEREKFPYTVRVVSEVLESNGSSSMATVCSGTLSMLHAGVPMKKPVAGIAMGLITEGNDRYAILSDILGEEDHLGDMDFKVAGTADGITGFQMDIKIAGVSPEIMKNALAQAKEGRMHILGIMNQCISAPNAELSQYAPRVEMMTIPEDKIGALIGPGGKNVKAISDKYNVTINTENDGTVTIYSKDGTSDLKGAKSIVKGITSDPEVGMVYDGTVKKIMDFGAFVEILPGKEGLCHISKLSRSRVEKVSDVLKEGQEIPVKLLEIDKLGRLNLSYVDALEERSK</sequence>
<evidence type="ECO:0000255" key="1">
    <source>
        <dbReference type="HAMAP-Rule" id="MF_01595"/>
    </source>
</evidence>